<accession>Q3SZM3</accession>
<protein>
    <recommendedName>
        <fullName evidence="5">Cytochrome b-245 chaperone 1</fullName>
    </recommendedName>
    <alternativeName>
        <fullName evidence="1">Essential for reactive oxygen species protein</fullName>
        <shortName evidence="1">Eros</shortName>
    </alternativeName>
</protein>
<proteinExistence type="evidence at transcript level"/>
<name>CYBC1_BOVIN</name>
<comment type="function">
    <text evidence="1 3">Functions as a chaperone necessary for a stable expression of the CYBA and CYBB subunits of the cytochrome b-245 heterodimer (By similarity). Controls the phagocyte respiratory burst and is essential for innate immunity (By similarity).</text>
</comment>
<comment type="subunit">
    <text evidence="3">Interacts with CYBB; CYBC1 may act as a chaperone stabilizing Cytochrome b-245 heterodimer.</text>
</comment>
<comment type="subcellular location">
    <subcellularLocation>
        <location evidence="3">Endoplasmic reticulum membrane</location>
        <topology evidence="5">Single-pass membrane protein</topology>
    </subcellularLocation>
</comment>
<comment type="similarity">
    <text>Belongs to the CYBC1 family.</text>
</comment>
<reference key="1">
    <citation type="submission" date="2005-08" db="EMBL/GenBank/DDBJ databases">
        <authorList>
            <consortium name="NIH - Mammalian Gene Collection (MGC) project"/>
        </authorList>
    </citation>
    <scope>NUCLEOTIDE SEQUENCE [LARGE SCALE MRNA]</scope>
    <source>
        <strain>Crossbred X Angus</strain>
        <tissue>Ileum</tissue>
    </source>
</reference>
<evidence type="ECO:0000250" key="1">
    <source>
        <dbReference type="UniProtKB" id="Q3TYS2"/>
    </source>
</evidence>
<evidence type="ECO:0000250" key="2">
    <source>
        <dbReference type="UniProtKB" id="Q6AYA6"/>
    </source>
</evidence>
<evidence type="ECO:0000250" key="3">
    <source>
        <dbReference type="UniProtKB" id="Q9BQA9"/>
    </source>
</evidence>
<evidence type="ECO:0000255" key="4"/>
<evidence type="ECO:0000305" key="5"/>
<gene>
    <name evidence="1" type="primary">CYBC1</name>
    <name evidence="1" type="synonym">EROS</name>
</gene>
<keyword id="KW-0143">Chaperone</keyword>
<keyword id="KW-0256">Endoplasmic reticulum</keyword>
<keyword id="KW-0391">Immunity</keyword>
<keyword id="KW-0399">Innate immunity</keyword>
<keyword id="KW-0472">Membrane</keyword>
<keyword id="KW-0597">Phosphoprotein</keyword>
<keyword id="KW-1185">Reference proteome</keyword>
<keyword id="KW-0812">Transmembrane</keyword>
<keyword id="KW-1133">Transmembrane helix</keyword>
<sequence length="187" mass="20905">MYMQVETRTSSRLHLKRAPGIRSWSLLVGILSIGLAAAYYSGDSLGWKLFYVTGCLFVAVQNLEDWEEAIFNKSTGKVVLKTFSLYRKLLTLCRAGHDQVVVLLSDIRDVNVEEEKVRYFGKGYVVVLRFATGFSHPLTQSAVMGHRSDVEVIAKLITTFLELHRLESPVELSQSSDSEADSPGDQS</sequence>
<feature type="chain" id="PRO_0000281417" description="Cytochrome b-245 chaperone 1">
    <location>
        <begin position="1"/>
        <end position="187"/>
    </location>
</feature>
<feature type="transmembrane region" description="Helical" evidence="4">
    <location>
        <begin position="20"/>
        <end position="42"/>
    </location>
</feature>
<feature type="modified residue" description="Phosphoserine" evidence="2">
    <location>
        <position position="168"/>
    </location>
</feature>
<organism>
    <name type="scientific">Bos taurus</name>
    <name type="common">Bovine</name>
    <dbReference type="NCBI Taxonomy" id="9913"/>
    <lineage>
        <taxon>Eukaryota</taxon>
        <taxon>Metazoa</taxon>
        <taxon>Chordata</taxon>
        <taxon>Craniata</taxon>
        <taxon>Vertebrata</taxon>
        <taxon>Euteleostomi</taxon>
        <taxon>Mammalia</taxon>
        <taxon>Eutheria</taxon>
        <taxon>Laurasiatheria</taxon>
        <taxon>Artiodactyla</taxon>
        <taxon>Ruminantia</taxon>
        <taxon>Pecora</taxon>
        <taxon>Bovidae</taxon>
        <taxon>Bovinae</taxon>
        <taxon>Bos</taxon>
    </lineage>
</organism>
<dbReference type="EMBL" id="BC102788">
    <property type="protein sequence ID" value="AAI02789.1"/>
    <property type="molecule type" value="mRNA"/>
</dbReference>
<dbReference type="RefSeq" id="NP_001071555.1">
    <property type="nucleotide sequence ID" value="NM_001078087.2"/>
</dbReference>
<dbReference type="RefSeq" id="XP_005221126.1">
    <property type="nucleotide sequence ID" value="XM_005221069.5"/>
</dbReference>
<dbReference type="RefSeq" id="XP_005221127.1">
    <property type="nucleotide sequence ID" value="XM_005221070.5"/>
</dbReference>
<dbReference type="RefSeq" id="XP_024836261.1">
    <property type="nucleotide sequence ID" value="XM_024980493.2"/>
</dbReference>
<dbReference type="SMR" id="Q3SZM3"/>
<dbReference type="FunCoup" id="Q3SZM3">
    <property type="interactions" value="2493"/>
</dbReference>
<dbReference type="STRING" id="9913.ENSBTAP00000024188"/>
<dbReference type="PaxDb" id="9913-ENSBTAP00000024188"/>
<dbReference type="Ensembl" id="ENSBTAT00000024188.3">
    <property type="protein sequence ID" value="ENSBTAP00000024188.2"/>
    <property type="gene ID" value="ENSBTAG00000018176.4"/>
</dbReference>
<dbReference type="GeneID" id="618343"/>
<dbReference type="KEGG" id="bta:618343"/>
<dbReference type="CTD" id="79415"/>
<dbReference type="VEuPathDB" id="HostDB:ENSBTAG00000018176"/>
<dbReference type="VGNC" id="VGNC:52655">
    <property type="gene designation" value="CYBC1"/>
</dbReference>
<dbReference type="eggNOG" id="ENOG502S06T">
    <property type="taxonomic scope" value="Eukaryota"/>
</dbReference>
<dbReference type="GeneTree" id="ENSGT00390000004691"/>
<dbReference type="HOGENOM" id="CLU_100734_0_0_1"/>
<dbReference type="InParanoid" id="Q3SZM3"/>
<dbReference type="OMA" id="WKLFYIT"/>
<dbReference type="OrthoDB" id="10022724at2759"/>
<dbReference type="TreeFam" id="TF332389"/>
<dbReference type="Proteomes" id="UP000009136">
    <property type="component" value="Chromosome 19"/>
</dbReference>
<dbReference type="Bgee" id="ENSBTAG00000018176">
    <property type="expression patterns" value="Expressed in nasopharynx and 107 other cell types or tissues"/>
</dbReference>
<dbReference type="GO" id="GO:0005783">
    <property type="term" value="C:endoplasmic reticulum"/>
    <property type="evidence" value="ECO:0000250"/>
    <property type="project" value="UniProtKB"/>
</dbReference>
<dbReference type="GO" id="GO:0005789">
    <property type="term" value="C:endoplasmic reticulum membrane"/>
    <property type="evidence" value="ECO:0007669"/>
    <property type="project" value="UniProtKB-SubCell"/>
</dbReference>
<dbReference type="GO" id="GO:0045087">
    <property type="term" value="P:innate immune response"/>
    <property type="evidence" value="ECO:0000250"/>
    <property type="project" value="UniProtKB"/>
</dbReference>
<dbReference type="GO" id="GO:0045728">
    <property type="term" value="P:respiratory burst after phagocytosis"/>
    <property type="evidence" value="ECO:0000250"/>
    <property type="project" value="UniProtKB"/>
</dbReference>
<dbReference type="InterPro" id="IPR027846">
    <property type="entry name" value="Cybc1"/>
</dbReference>
<dbReference type="PANTHER" id="PTHR31837">
    <property type="entry name" value="CYTOCHROME B-245 CHAPERONE 1"/>
    <property type="match status" value="1"/>
</dbReference>
<dbReference type="PANTHER" id="PTHR31837:SF3">
    <property type="entry name" value="CYTOCHROME B-245 CHAPERONE 1"/>
    <property type="match status" value="1"/>
</dbReference>
<dbReference type="Pfam" id="PF15169">
    <property type="entry name" value="Cybc1_Eros"/>
    <property type="match status" value="1"/>
</dbReference>